<reference key="1">
    <citation type="submission" date="2007-06" db="EMBL/GenBank/DDBJ databases">
        <authorList>
            <person name="Dodson R.J."/>
            <person name="Harkins D."/>
            <person name="Paulsen I.T."/>
        </authorList>
    </citation>
    <scope>NUCLEOTIDE SEQUENCE [LARGE SCALE GENOMIC DNA]</scope>
    <source>
        <strain>DSM 24068 / PA7</strain>
    </source>
</reference>
<feature type="signal peptide" evidence="1">
    <location>
        <begin position="1"/>
        <end position="23"/>
    </location>
</feature>
<feature type="chain" id="PRO_1000062242" description="UPF0312 protein PSPA7_0523">
    <location>
        <begin position="24"/>
        <end position="191"/>
    </location>
</feature>
<accession>A6UYN3</accession>
<gene>
    <name type="ordered locus">PSPA7_0523</name>
</gene>
<comment type="subcellular location">
    <subcellularLocation>
        <location evidence="1">Periplasm</location>
    </subcellularLocation>
</comment>
<comment type="similarity">
    <text evidence="1">Belongs to the UPF0312 family. Type 1 subfamily.</text>
</comment>
<sequence>MLKKTLAALALGSALFTAGQAMAADYKIDKEGQHAFIEFRIKHLGYSWLYGRFNDFDGSFTFDEKNPSADKVKVTINTNSVDTNHAERDKHLRSGDFLNVGKNPTATFESTEVKANGDSADITGNLTLNGVTKPVTIKAKLLGQGNDPWGGYRAGFEGSATLKLKDFGIKMDLGPASQEVELLLSVEGIRQ</sequence>
<keyword id="KW-0574">Periplasm</keyword>
<keyword id="KW-0732">Signal</keyword>
<name>Y523_PSEP7</name>
<proteinExistence type="inferred from homology"/>
<protein>
    <recommendedName>
        <fullName evidence="1">UPF0312 protein PSPA7_0523</fullName>
    </recommendedName>
</protein>
<dbReference type="EMBL" id="CP000744">
    <property type="protein sequence ID" value="ABR83198.1"/>
    <property type="molecule type" value="Genomic_DNA"/>
</dbReference>
<dbReference type="RefSeq" id="WP_003155469.1">
    <property type="nucleotide sequence ID" value="NC_009656.1"/>
</dbReference>
<dbReference type="SMR" id="A6UYN3"/>
<dbReference type="GeneID" id="77218950"/>
<dbReference type="KEGG" id="pap:PSPA7_0523"/>
<dbReference type="HOGENOM" id="CLU_071003_1_2_6"/>
<dbReference type="Proteomes" id="UP000001582">
    <property type="component" value="Chromosome"/>
</dbReference>
<dbReference type="GO" id="GO:0042597">
    <property type="term" value="C:periplasmic space"/>
    <property type="evidence" value="ECO:0007669"/>
    <property type="project" value="UniProtKB-SubCell"/>
</dbReference>
<dbReference type="Gene3D" id="2.40.128.110">
    <property type="entry name" value="Lipid/polyisoprenoid-binding, YceI-like"/>
    <property type="match status" value="1"/>
</dbReference>
<dbReference type="HAMAP" id="MF_00780">
    <property type="entry name" value="UPF0312"/>
    <property type="match status" value="1"/>
</dbReference>
<dbReference type="InterPro" id="IPR007372">
    <property type="entry name" value="Lipid/polyisoprenoid-bd_YceI"/>
</dbReference>
<dbReference type="InterPro" id="IPR036761">
    <property type="entry name" value="TTHA0802/YceI-like_sf"/>
</dbReference>
<dbReference type="InterPro" id="IPR023480">
    <property type="entry name" value="UPF0312/YceI"/>
</dbReference>
<dbReference type="NCBIfam" id="NF002994">
    <property type="entry name" value="PRK03757.1"/>
    <property type="match status" value="1"/>
</dbReference>
<dbReference type="PANTHER" id="PTHR34406">
    <property type="entry name" value="PROTEIN YCEI"/>
    <property type="match status" value="1"/>
</dbReference>
<dbReference type="PANTHER" id="PTHR34406:SF1">
    <property type="entry name" value="PROTEIN YCEI"/>
    <property type="match status" value="1"/>
</dbReference>
<dbReference type="Pfam" id="PF04264">
    <property type="entry name" value="YceI"/>
    <property type="match status" value="1"/>
</dbReference>
<dbReference type="SMART" id="SM00867">
    <property type="entry name" value="YceI"/>
    <property type="match status" value="1"/>
</dbReference>
<dbReference type="SUPFAM" id="SSF101874">
    <property type="entry name" value="YceI-like"/>
    <property type="match status" value="1"/>
</dbReference>
<evidence type="ECO:0000255" key="1">
    <source>
        <dbReference type="HAMAP-Rule" id="MF_00780"/>
    </source>
</evidence>
<organism>
    <name type="scientific">Pseudomonas paraeruginosa (strain DSM 24068 / PA7)</name>
    <name type="common">Pseudomonas aeruginosa (strain PA7)</name>
    <dbReference type="NCBI Taxonomy" id="381754"/>
    <lineage>
        <taxon>Bacteria</taxon>
        <taxon>Pseudomonadati</taxon>
        <taxon>Pseudomonadota</taxon>
        <taxon>Gammaproteobacteria</taxon>
        <taxon>Pseudomonadales</taxon>
        <taxon>Pseudomonadaceae</taxon>
        <taxon>Pseudomonas</taxon>
        <taxon>Pseudomonas paraeruginosa</taxon>
    </lineage>
</organism>